<dbReference type="EMBL" id="AF056617">
    <property type="protein sequence ID" value="AAF00004.1"/>
    <property type="molecule type" value="mRNA"/>
</dbReference>
<dbReference type="EMBL" id="AK313462">
    <property type="protein sequence ID" value="BAG36248.1"/>
    <property type="molecule type" value="mRNA"/>
</dbReference>
<dbReference type="EMBL" id="AC100875">
    <property type="status" value="NOT_ANNOTATED_CDS"/>
    <property type="molecule type" value="Genomic_DNA"/>
</dbReference>
<dbReference type="EMBL" id="BC136772">
    <property type="protein sequence ID" value="AAI36773.1"/>
    <property type="molecule type" value="mRNA"/>
</dbReference>
<dbReference type="CCDS" id="CCDS31418.1"/>
<dbReference type="RefSeq" id="NP_001341760.1">
    <property type="nucleotide sequence ID" value="NM_001354831.2"/>
</dbReference>
<dbReference type="RefSeq" id="NP_001341761.1">
    <property type="nucleotide sequence ID" value="NM_001354832.2"/>
</dbReference>
<dbReference type="RefSeq" id="NP_037381.2">
    <property type="nucleotide sequence ID" value="NM_013249.4"/>
</dbReference>
<dbReference type="RefSeq" id="XP_005253185.1">
    <property type="nucleotide sequence ID" value="XM_005253128.3"/>
</dbReference>
<dbReference type="RefSeq" id="XP_006718371.1">
    <property type="nucleotide sequence ID" value="XM_006718308.3"/>
</dbReference>
<dbReference type="RefSeq" id="XP_047283521.1">
    <property type="nucleotide sequence ID" value="XM_047427565.1"/>
</dbReference>
<dbReference type="SMR" id="Q9UL59"/>
<dbReference type="BioGRID" id="113544">
    <property type="interactions" value="15"/>
</dbReference>
<dbReference type="FunCoup" id="Q9UL59">
    <property type="interactions" value="13"/>
</dbReference>
<dbReference type="IntAct" id="Q9UL59">
    <property type="interactions" value="14"/>
</dbReference>
<dbReference type="STRING" id="9606.ENSP00000278314"/>
<dbReference type="GlyGen" id="Q9UL59">
    <property type="glycosylation" value="1 site, 1 O-linked glycan (1 site)"/>
</dbReference>
<dbReference type="iPTMnet" id="Q9UL59"/>
<dbReference type="PhosphoSitePlus" id="Q9UL59"/>
<dbReference type="BioMuta" id="ZNF214"/>
<dbReference type="DMDM" id="296453038"/>
<dbReference type="jPOST" id="Q9UL59"/>
<dbReference type="MassIVE" id="Q9UL59"/>
<dbReference type="PaxDb" id="9606-ENSP00000278314"/>
<dbReference type="PeptideAtlas" id="Q9UL59"/>
<dbReference type="ProteomicsDB" id="84957"/>
<dbReference type="Pumba" id="Q9UL59"/>
<dbReference type="Antibodypedia" id="11387">
    <property type="antibodies" value="113 antibodies from 17 providers"/>
</dbReference>
<dbReference type="DNASU" id="7761"/>
<dbReference type="Ensembl" id="ENST00000278314.5">
    <property type="protein sequence ID" value="ENSP00000278314.4"/>
    <property type="gene ID" value="ENSG00000149050.10"/>
</dbReference>
<dbReference type="Ensembl" id="ENST00000536068.5">
    <property type="protein sequence ID" value="ENSP00000445373.1"/>
    <property type="gene ID" value="ENSG00000149050.10"/>
</dbReference>
<dbReference type="GeneID" id="7761"/>
<dbReference type="KEGG" id="hsa:7761"/>
<dbReference type="MANE-Select" id="ENST00000278314.5">
    <property type="protein sequence ID" value="ENSP00000278314.4"/>
    <property type="RefSeq nucleotide sequence ID" value="NM_013249.4"/>
    <property type="RefSeq protein sequence ID" value="NP_037381.2"/>
</dbReference>
<dbReference type="UCSC" id="uc001mfa.3">
    <property type="organism name" value="human"/>
</dbReference>
<dbReference type="AGR" id="HGNC:13006"/>
<dbReference type="CTD" id="7761"/>
<dbReference type="DisGeNET" id="7761"/>
<dbReference type="GeneCards" id="ZNF214"/>
<dbReference type="HGNC" id="HGNC:13006">
    <property type="gene designation" value="ZNF214"/>
</dbReference>
<dbReference type="HPA" id="ENSG00000149050">
    <property type="expression patterns" value="Low tissue specificity"/>
</dbReference>
<dbReference type="MIM" id="605015">
    <property type="type" value="gene"/>
</dbReference>
<dbReference type="neXtProt" id="NX_Q9UL59"/>
<dbReference type="OpenTargets" id="ENSG00000149050"/>
<dbReference type="PharmGKB" id="PA37585"/>
<dbReference type="VEuPathDB" id="HostDB:ENSG00000149050"/>
<dbReference type="eggNOG" id="KOG1721">
    <property type="taxonomic scope" value="Eukaryota"/>
</dbReference>
<dbReference type="GeneTree" id="ENSGT00940000163179"/>
<dbReference type="HOGENOM" id="CLU_002678_0_11_1"/>
<dbReference type="InParanoid" id="Q9UL59"/>
<dbReference type="OMA" id="FECDKDL"/>
<dbReference type="OrthoDB" id="9819825at2759"/>
<dbReference type="PAN-GO" id="Q9UL59">
    <property type="GO annotations" value="4 GO annotations based on evolutionary models"/>
</dbReference>
<dbReference type="PhylomeDB" id="Q9UL59"/>
<dbReference type="TreeFam" id="TF350845"/>
<dbReference type="PathwayCommons" id="Q9UL59"/>
<dbReference type="Reactome" id="R-HSA-212436">
    <property type="pathway name" value="Generic Transcription Pathway"/>
</dbReference>
<dbReference type="SignaLink" id="Q9UL59"/>
<dbReference type="BioGRID-ORCS" id="7761">
    <property type="hits" value="9 hits in 1167 CRISPR screens"/>
</dbReference>
<dbReference type="GenomeRNAi" id="7761"/>
<dbReference type="Pharos" id="Q9UL59">
    <property type="development level" value="Tbio"/>
</dbReference>
<dbReference type="PRO" id="PR:Q9UL59"/>
<dbReference type="Proteomes" id="UP000005640">
    <property type="component" value="Chromosome 11"/>
</dbReference>
<dbReference type="RNAct" id="Q9UL59">
    <property type="molecule type" value="protein"/>
</dbReference>
<dbReference type="Bgee" id="ENSG00000149050">
    <property type="expression patterns" value="Expressed in buccal mucosa cell and 112 other cell types or tissues"/>
</dbReference>
<dbReference type="GO" id="GO:0005634">
    <property type="term" value="C:nucleus"/>
    <property type="evidence" value="ECO:0007669"/>
    <property type="project" value="UniProtKB-SubCell"/>
</dbReference>
<dbReference type="GO" id="GO:0003677">
    <property type="term" value="F:DNA binding"/>
    <property type="evidence" value="ECO:0007669"/>
    <property type="project" value="UniProtKB-KW"/>
</dbReference>
<dbReference type="GO" id="GO:0003700">
    <property type="term" value="F:DNA-binding transcription factor activity"/>
    <property type="evidence" value="ECO:0000303"/>
    <property type="project" value="ARUK-UCL"/>
</dbReference>
<dbReference type="GO" id="GO:0008270">
    <property type="term" value="F:zinc ion binding"/>
    <property type="evidence" value="ECO:0000303"/>
    <property type="project" value="UniProtKB"/>
</dbReference>
<dbReference type="CDD" id="cd07765">
    <property type="entry name" value="KRAB_A-box"/>
    <property type="match status" value="1"/>
</dbReference>
<dbReference type="FunFam" id="3.30.160.60:FF:004808">
    <property type="match status" value="1"/>
</dbReference>
<dbReference type="FunFam" id="3.30.160.60:FF:000029">
    <property type="entry name" value="GLI family zinc finger 4"/>
    <property type="match status" value="1"/>
</dbReference>
<dbReference type="FunFam" id="3.30.160.60:FF:000725">
    <property type="entry name" value="zinc finger protein 205 isoform X1"/>
    <property type="match status" value="1"/>
</dbReference>
<dbReference type="FunFam" id="3.30.160.60:FF:000726">
    <property type="entry name" value="Zinc finger protein 214"/>
    <property type="match status" value="1"/>
</dbReference>
<dbReference type="FunFam" id="3.30.160.60:FF:002073">
    <property type="entry name" value="Zinc finger protein 214"/>
    <property type="match status" value="1"/>
</dbReference>
<dbReference type="FunFam" id="3.30.160.60:FF:003138">
    <property type="entry name" value="Zinc finger protein 214"/>
    <property type="match status" value="1"/>
</dbReference>
<dbReference type="FunFam" id="3.30.160.60:FF:001534">
    <property type="entry name" value="zinc finger protein 227 isoform X1"/>
    <property type="match status" value="1"/>
</dbReference>
<dbReference type="FunFam" id="3.30.160.60:FF:000874">
    <property type="entry name" value="zinc finger protein 235 isoform X1"/>
    <property type="match status" value="2"/>
</dbReference>
<dbReference type="FunFam" id="3.30.160.60:FF:000663">
    <property type="entry name" value="Zinc finger protein 45"/>
    <property type="match status" value="1"/>
</dbReference>
<dbReference type="FunFam" id="3.30.160.60:FF:002357">
    <property type="entry name" value="Zinc finger protein 782"/>
    <property type="match status" value="1"/>
</dbReference>
<dbReference type="Gene3D" id="6.10.140.140">
    <property type="match status" value="1"/>
</dbReference>
<dbReference type="Gene3D" id="3.30.160.60">
    <property type="entry name" value="Classic Zinc Finger"/>
    <property type="match status" value="13"/>
</dbReference>
<dbReference type="InterPro" id="IPR050636">
    <property type="entry name" value="C2H2-ZF_domain-containing"/>
</dbReference>
<dbReference type="InterPro" id="IPR001909">
    <property type="entry name" value="KRAB"/>
</dbReference>
<dbReference type="InterPro" id="IPR036051">
    <property type="entry name" value="KRAB_dom_sf"/>
</dbReference>
<dbReference type="InterPro" id="IPR036236">
    <property type="entry name" value="Znf_C2H2_sf"/>
</dbReference>
<dbReference type="InterPro" id="IPR013087">
    <property type="entry name" value="Znf_C2H2_type"/>
</dbReference>
<dbReference type="PANTHER" id="PTHR47772:SF15">
    <property type="entry name" value="REDUCED EXPRESSION 2-RELATED"/>
    <property type="match status" value="1"/>
</dbReference>
<dbReference type="PANTHER" id="PTHR47772">
    <property type="entry name" value="ZINC FINGER PROTEIN 200"/>
    <property type="match status" value="1"/>
</dbReference>
<dbReference type="Pfam" id="PF01352">
    <property type="entry name" value="KRAB"/>
    <property type="match status" value="1"/>
</dbReference>
<dbReference type="Pfam" id="PF00096">
    <property type="entry name" value="zf-C2H2"/>
    <property type="match status" value="9"/>
</dbReference>
<dbReference type="SMART" id="SM00349">
    <property type="entry name" value="KRAB"/>
    <property type="match status" value="1"/>
</dbReference>
<dbReference type="SMART" id="SM00355">
    <property type="entry name" value="ZnF_C2H2"/>
    <property type="match status" value="10"/>
</dbReference>
<dbReference type="SUPFAM" id="SSF57667">
    <property type="entry name" value="beta-beta-alpha zinc fingers"/>
    <property type="match status" value="7"/>
</dbReference>
<dbReference type="SUPFAM" id="SSF109640">
    <property type="entry name" value="KRAB domain (Kruppel-associated box)"/>
    <property type="match status" value="1"/>
</dbReference>
<dbReference type="PROSITE" id="PS50805">
    <property type="entry name" value="KRAB"/>
    <property type="match status" value="1"/>
</dbReference>
<dbReference type="PROSITE" id="PS00028">
    <property type="entry name" value="ZINC_FINGER_C2H2_1"/>
    <property type="match status" value="10"/>
</dbReference>
<dbReference type="PROSITE" id="PS50157">
    <property type="entry name" value="ZINC_FINGER_C2H2_2"/>
    <property type="match status" value="12"/>
</dbReference>
<name>ZN214_HUMAN</name>
<protein>
    <recommendedName>
        <fullName>Zinc finger protein 214</fullName>
    </recommendedName>
    <alternativeName>
        <fullName>BWSCR2-associated zinc finger protein 1</fullName>
        <shortName>BAZ-1</shortName>
    </alternativeName>
</protein>
<accession>Q9UL59</accession>
<accession>B2R8Q1</accession>
<keyword id="KW-0238">DNA-binding</keyword>
<keyword id="KW-0479">Metal-binding</keyword>
<keyword id="KW-0539">Nucleus</keyword>
<keyword id="KW-1267">Proteomics identification</keyword>
<keyword id="KW-1185">Reference proteome</keyword>
<keyword id="KW-0677">Repeat</keyword>
<keyword id="KW-0804">Transcription</keyword>
<keyword id="KW-0805">Transcription regulation</keyword>
<keyword id="KW-0862">Zinc</keyword>
<keyword id="KW-0863">Zinc-finger</keyword>
<proteinExistence type="evidence at protein level"/>
<reference key="1">
    <citation type="journal article" date="2000" name="Am. J. Hum. Genet.">
        <title>Disruption of a novel imprinted zinc-finger gene, ZNF215, in Beckwith-Wiedemann syndrome.</title>
        <authorList>
            <person name="Alders M."/>
            <person name="Ryan A."/>
            <person name="Hodges M."/>
            <person name="Bliek J."/>
            <person name="Feinberg A.P."/>
            <person name="Privitera O."/>
            <person name="Westerveld A."/>
            <person name="Little P.F.R."/>
            <person name="Mannens M."/>
        </authorList>
    </citation>
    <scope>NUCLEOTIDE SEQUENCE [MRNA]</scope>
</reference>
<reference key="2">
    <citation type="journal article" date="2004" name="Nat. Genet.">
        <title>Complete sequencing and characterization of 21,243 full-length human cDNAs.</title>
        <authorList>
            <person name="Ota T."/>
            <person name="Suzuki Y."/>
            <person name="Nishikawa T."/>
            <person name="Otsuki T."/>
            <person name="Sugiyama T."/>
            <person name="Irie R."/>
            <person name="Wakamatsu A."/>
            <person name="Hayashi K."/>
            <person name="Sato H."/>
            <person name="Nagai K."/>
            <person name="Kimura K."/>
            <person name="Makita H."/>
            <person name="Sekine M."/>
            <person name="Obayashi M."/>
            <person name="Nishi T."/>
            <person name="Shibahara T."/>
            <person name="Tanaka T."/>
            <person name="Ishii S."/>
            <person name="Yamamoto J."/>
            <person name="Saito K."/>
            <person name="Kawai Y."/>
            <person name="Isono Y."/>
            <person name="Nakamura Y."/>
            <person name="Nagahari K."/>
            <person name="Murakami K."/>
            <person name="Yasuda T."/>
            <person name="Iwayanagi T."/>
            <person name="Wagatsuma M."/>
            <person name="Shiratori A."/>
            <person name="Sudo H."/>
            <person name="Hosoiri T."/>
            <person name="Kaku Y."/>
            <person name="Kodaira H."/>
            <person name="Kondo H."/>
            <person name="Sugawara M."/>
            <person name="Takahashi M."/>
            <person name="Kanda K."/>
            <person name="Yokoi T."/>
            <person name="Furuya T."/>
            <person name="Kikkawa E."/>
            <person name="Omura Y."/>
            <person name="Abe K."/>
            <person name="Kamihara K."/>
            <person name="Katsuta N."/>
            <person name="Sato K."/>
            <person name="Tanikawa M."/>
            <person name="Yamazaki M."/>
            <person name="Ninomiya K."/>
            <person name="Ishibashi T."/>
            <person name="Yamashita H."/>
            <person name="Murakawa K."/>
            <person name="Fujimori K."/>
            <person name="Tanai H."/>
            <person name="Kimata M."/>
            <person name="Watanabe M."/>
            <person name="Hiraoka S."/>
            <person name="Chiba Y."/>
            <person name="Ishida S."/>
            <person name="Ono Y."/>
            <person name="Takiguchi S."/>
            <person name="Watanabe S."/>
            <person name="Yosida M."/>
            <person name="Hotuta T."/>
            <person name="Kusano J."/>
            <person name="Kanehori K."/>
            <person name="Takahashi-Fujii A."/>
            <person name="Hara H."/>
            <person name="Tanase T.-O."/>
            <person name="Nomura Y."/>
            <person name="Togiya S."/>
            <person name="Komai F."/>
            <person name="Hara R."/>
            <person name="Takeuchi K."/>
            <person name="Arita M."/>
            <person name="Imose N."/>
            <person name="Musashino K."/>
            <person name="Yuuki H."/>
            <person name="Oshima A."/>
            <person name="Sasaki N."/>
            <person name="Aotsuka S."/>
            <person name="Yoshikawa Y."/>
            <person name="Matsunawa H."/>
            <person name="Ichihara T."/>
            <person name="Shiohata N."/>
            <person name="Sano S."/>
            <person name="Moriya S."/>
            <person name="Momiyama H."/>
            <person name="Satoh N."/>
            <person name="Takami S."/>
            <person name="Terashima Y."/>
            <person name="Suzuki O."/>
            <person name="Nakagawa S."/>
            <person name="Senoh A."/>
            <person name="Mizoguchi H."/>
            <person name="Goto Y."/>
            <person name="Shimizu F."/>
            <person name="Wakebe H."/>
            <person name="Hishigaki H."/>
            <person name="Watanabe T."/>
            <person name="Sugiyama A."/>
            <person name="Takemoto M."/>
            <person name="Kawakami B."/>
            <person name="Yamazaki M."/>
            <person name="Watanabe K."/>
            <person name="Kumagai A."/>
            <person name="Itakura S."/>
            <person name="Fukuzumi Y."/>
            <person name="Fujimori Y."/>
            <person name="Komiyama M."/>
            <person name="Tashiro H."/>
            <person name="Tanigami A."/>
            <person name="Fujiwara T."/>
            <person name="Ono T."/>
            <person name="Yamada K."/>
            <person name="Fujii Y."/>
            <person name="Ozaki K."/>
            <person name="Hirao M."/>
            <person name="Ohmori Y."/>
            <person name="Kawabata A."/>
            <person name="Hikiji T."/>
            <person name="Kobatake N."/>
            <person name="Inagaki H."/>
            <person name="Ikema Y."/>
            <person name="Okamoto S."/>
            <person name="Okitani R."/>
            <person name="Kawakami T."/>
            <person name="Noguchi S."/>
            <person name="Itoh T."/>
            <person name="Shigeta K."/>
            <person name="Senba T."/>
            <person name="Matsumura K."/>
            <person name="Nakajima Y."/>
            <person name="Mizuno T."/>
            <person name="Morinaga M."/>
            <person name="Sasaki M."/>
            <person name="Togashi T."/>
            <person name="Oyama M."/>
            <person name="Hata H."/>
            <person name="Watanabe M."/>
            <person name="Komatsu T."/>
            <person name="Mizushima-Sugano J."/>
            <person name="Satoh T."/>
            <person name="Shirai Y."/>
            <person name="Takahashi Y."/>
            <person name="Nakagawa K."/>
            <person name="Okumura K."/>
            <person name="Nagase T."/>
            <person name="Nomura N."/>
            <person name="Kikuchi H."/>
            <person name="Masuho Y."/>
            <person name="Yamashita R."/>
            <person name="Nakai K."/>
            <person name="Yada T."/>
            <person name="Nakamura Y."/>
            <person name="Ohara O."/>
            <person name="Isogai T."/>
            <person name="Sugano S."/>
        </authorList>
    </citation>
    <scope>NUCLEOTIDE SEQUENCE [LARGE SCALE MRNA]</scope>
    <source>
        <tissue>Corpus callosum</tissue>
    </source>
</reference>
<reference key="3">
    <citation type="journal article" date="2006" name="Nature">
        <title>Human chromosome 11 DNA sequence and analysis including novel gene identification.</title>
        <authorList>
            <person name="Taylor T.D."/>
            <person name="Noguchi H."/>
            <person name="Totoki Y."/>
            <person name="Toyoda A."/>
            <person name="Kuroki Y."/>
            <person name="Dewar K."/>
            <person name="Lloyd C."/>
            <person name="Itoh T."/>
            <person name="Takeda T."/>
            <person name="Kim D.-W."/>
            <person name="She X."/>
            <person name="Barlow K.F."/>
            <person name="Bloom T."/>
            <person name="Bruford E."/>
            <person name="Chang J.L."/>
            <person name="Cuomo C.A."/>
            <person name="Eichler E."/>
            <person name="FitzGerald M.G."/>
            <person name="Jaffe D.B."/>
            <person name="LaButti K."/>
            <person name="Nicol R."/>
            <person name="Park H.-S."/>
            <person name="Seaman C."/>
            <person name="Sougnez C."/>
            <person name="Yang X."/>
            <person name="Zimmer A.R."/>
            <person name="Zody M.C."/>
            <person name="Birren B.W."/>
            <person name="Nusbaum C."/>
            <person name="Fujiyama A."/>
            <person name="Hattori M."/>
            <person name="Rogers J."/>
            <person name="Lander E.S."/>
            <person name="Sakaki Y."/>
        </authorList>
    </citation>
    <scope>NUCLEOTIDE SEQUENCE [LARGE SCALE GENOMIC DNA]</scope>
</reference>
<reference key="4">
    <citation type="journal article" date="2004" name="Genome Res.">
        <title>The status, quality, and expansion of the NIH full-length cDNA project: the Mammalian Gene Collection (MGC).</title>
        <authorList>
            <consortium name="The MGC Project Team"/>
        </authorList>
    </citation>
    <scope>NUCLEOTIDE SEQUENCE [LARGE SCALE MRNA]</scope>
    <source>
        <tissue>Brain</tissue>
    </source>
</reference>
<gene>
    <name type="primary">ZNF214</name>
    <name type="synonym">BAZ1</name>
</gene>
<comment type="function">
    <text>May be involved in transcriptional regulation.</text>
</comment>
<comment type="subcellular location">
    <subcellularLocation>
        <location evidence="3">Nucleus</location>
    </subcellularLocation>
</comment>
<comment type="similarity">
    <text evidence="3">Belongs to the krueppel C2H2-type zinc-finger protein family.</text>
</comment>
<feature type="chain" id="PRO_0000047458" description="Zinc finger protein 214">
    <location>
        <begin position="1"/>
        <end position="606"/>
    </location>
</feature>
<feature type="domain" description="KRAB" evidence="2">
    <location>
        <begin position="3"/>
        <end position="83"/>
    </location>
</feature>
<feature type="zinc finger region" description="C2H2-type 1; degenerate" evidence="1">
    <location>
        <begin position="275"/>
        <end position="297"/>
    </location>
</feature>
<feature type="zinc finger region" description="C2H2-type 2" evidence="1">
    <location>
        <begin position="303"/>
        <end position="325"/>
    </location>
</feature>
<feature type="zinc finger region" description="C2H2-type 3; degenerate" evidence="1">
    <location>
        <begin position="330"/>
        <end position="352"/>
    </location>
</feature>
<feature type="zinc finger region" description="C2H2-type 4" evidence="1">
    <location>
        <begin position="358"/>
        <end position="380"/>
    </location>
</feature>
<feature type="zinc finger region" description="C2H2-type 5" evidence="1">
    <location>
        <begin position="386"/>
        <end position="408"/>
    </location>
</feature>
<feature type="zinc finger region" description="C2H2-type 6" evidence="1">
    <location>
        <begin position="414"/>
        <end position="436"/>
    </location>
</feature>
<feature type="zinc finger region" description="C2H2-type 7" evidence="1">
    <location>
        <begin position="442"/>
        <end position="464"/>
    </location>
</feature>
<feature type="zinc finger region" description="C2H2-type 8" evidence="1">
    <location>
        <begin position="470"/>
        <end position="492"/>
    </location>
</feature>
<feature type="zinc finger region" description="C2H2-type 9" evidence="1">
    <location>
        <begin position="498"/>
        <end position="520"/>
    </location>
</feature>
<feature type="zinc finger region" description="C2H2-type 10" evidence="1">
    <location>
        <begin position="526"/>
        <end position="548"/>
    </location>
</feature>
<feature type="zinc finger region" description="C2H2-type 11" evidence="1">
    <location>
        <begin position="554"/>
        <end position="576"/>
    </location>
</feature>
<feature type="sequence variant" id="VAR_057403" description="In dbSNP:rs1156526.">
    <original>Y</original>
    <variation>C</variation>
    <location>
        <position position="66"/>
    </location>
</feature>
<feature type="sequence variant" id="VAR_019975" description="In dbSNP:rs1156525.">
    <original>L</original>
    <variation>H</variation>
    <location>
        <position position="128"/>
    </location>
</feature>
<feature type="sequence variant" id="VAR_057404" description="In dbSNP:rs16921097.">
    <original>H</original>
    <variation>R</variation>
    <location>
        <position position="160"/>
    </location>
</feature>
<feature type="sequence variant" id="VAR_019976" description="In dbSNP:rs2239734.">
    <original>I</original>
    <variation>R</variation>
    <location>
        <position position="185"/>
    </location>
</feature>
<feature type="sequence conflict" description="In Ref. 1; AAF00004, 2; BAG36248 and 4; AAI36773." evidence="3" ref="1 2 4">
    <original>C</original>
    <variation>R</variation>
    <location>
        <position position="252"/>
    </location>
</feature>
<sequence>MAVTFEDVTIIFTWEEWKFLDSSQKRLYREVMWENYTNVMSVENWNESYKSQEEKFRYLEYENFSYWQGWWNAGAQMYENQNYGETVQGTDSKDLTQQDRSQCQEWLILSTQVPGYGNYELTFESKSLRNLKYKNFMPWQSLETKTTQDYGREIYMSGSHGFQGGRYRLGISRKNLSMEKEQKLIVQHSYIPVEEALPQYVGVICQEDLLRDSMEEKYCGCNKCKGIYYWNSRCVFHKRNQPGENLCQCSICKACFSQRSDLYRHPRNHIGKKLYGCDEVDGNFHQSSGVHFHQRVHIGEVPYSCNACGKSFSQISSLHNHQRVHTEEKFYKIECDKDLSRNSLLHIHQRLHIGEKPFKCNQCGKSFNRSSVLHVHQRVHTGEKPYKCDECGKGFSQSSNLRIHQLVHTGEKSYKCEDCGKGFTQRSNLQIHQRVHTGEKPYKCDDCGKDFSHSSDLRIHQRVHTGEKPYTCPECGKGFSKSSKLHTHQRVHTGEKPYKCEECGKGFSQRSHLLIHQRVHTGEKPYKCHDCGKGFSHSSNLHIHQRVHTGEKPYQCAKCGKGFSHSSALRIHQRVHAGEKPYKCREYYKGFDHNSHLHNNHRRGNL</sequence>
<organism>
    <name type="scientific">Homo sapiens</name>
    <name type="common">Human</name>
    <dbReference type="NCBI Taxonomy" id="9606"/>
    <lineage>
        <taxon>Eukaryota</taxon>
        <taxon>Metazoa</taxon>
        <taxon>Chordata</taxon>
        <taxon>Craniata</taxon>
        <taxon>Vertebrata</taxon>
        <taxon>Euteleostomi</taxon>
        <taxon>Mammalia</taxon>
        <taxon>Eutheria</taxon>
        <taxon>Euarchontoglires</taxon>
        <taxon>Primates</taxon>
        <taxon>Haplorrhini</taxon>
        <taxon>Catarrhini</taxon>
        <taxon>Hominidae</taxon>
        <taxon>Homo</taxon>
    </lineage>
</organism>
<evidence type="ECO:0000255" key="1">
    <source>
        <dbReference type="PROSITE-ProRule" id="PRU00042"/>
    </source>
</evidence>
<evidence type="ECO:0000255" key="2">
    <source>
        <dbReference type="PROSITE-ProRule" id="PRU00119"/>
    </source>
</evidence>
<evidence type="ECO:0000305" key="3"/>